<feature type="chain" id="PRO_1000058810" description="Adenylate kinase">
    <location>
        <begin position="1"/>
        <end position="192"/>
    </location>
</feature>
<feature type="region of interest" description="NMP" evidence="1">
    <location>
        <begin position="33"/>
        <end position="62"/>
    </location>
</feature>
<feature type="region of interest" description="LID" evidence="1">
    <location>
        <begin position="129"/>
        <end position="135"/>
    </location>
</feature>
<feature type="binding site" evidence="1">
    <location>
        <begin position="12"/>
        <end position="17"/>
    </location>
    <ligand>
        <name>ATP</name>
        <dbReference type="ChEBI" id="CHEBI:30616"/>
    </ligand>
</feature>
<feature type="binding site" evidence="1">
    <location>
        <position position="34"/>
    </location>
    <ligand>
        <name>AMP</name>
        <dbReference type="ChEBI" id="CHEBI:456215"/>
    </ligand>
</feature>
<feature type="binding site" evidence="1">
    <location>
        <position position="39"/>
    </location>
    <ligand>
        <name>AMP</name>
        <dbReference type="ChEBI" id="CHEBI:456215"/>
    </ligand>
</feature>
<feature type="binding site" evidence="1">
    <location>
        <begin position="60"/>
        <end position="62"/>
    </location>
    <ligand>
        <name>AMP</name>
        <dbReference type="ChEBI" id="CHEBI:456215"/>
    </ligand>
</feature>
<feature type="binding site" evidence="1">
    <location>
        <begin position="87"/>
        <end position="90"/>
    </location>
    <ligand>
        <name>AMP</name>
        <dbReference type="ChEBI" id="CHEBI:456215"/>
    </ligand>
</feature>
<feature type="binding site" evidence="1">
    <location>
        <position position="94"/>
    </location>
    <ligand>
        <name>AMP</name>
        <dbReference type="ChEBI" id="CHEBI:456215"/>
    </ligand>
</feature>
<feature type="binding site" evidence="1">
    <location>
        <position position="130"/>
    </location>
    <ligand>
        <name>ATP</name>
        <dbReference type="ChEBI" id="CHEBI:30616"/>
    </ligand>
</feature>
<feature type="binding site" evidence="1">
    <location>
        <position position="132"/>
    </location>
    <ligand>
        <name>AMP</name>
        <dbReference type="ChEBI" id="CHEBI:456215"/>
    </ligand>
</feature>
<feature type="binding site" evidence="1">
    <location>
        <position position="144"/>
    </location>
    <ligand>
        <name>AMP</name>
        <dbReference type="ChEBI" id="CHEBI:456215"/>
    </ligand>
</feature>
<feature type="binding site" evidence="1">
    <location>
        <position position="172"/>
    </location>
    <ligand>
        <name>ATP</name>
        <dbReference type="ChEBI" id="CHEBI:30616"/>
    </ligand>
</feature>
<protein>
    <recommendedName>
        <fullName evidence="1">Adenylate kinase</fullName>
        <shortName evidence="1">AK</shortName>
        <ecNumber evidence="1">2.7.4.3</ecNumber>
    </recommendedName>
    <alternativeName>
        <fullName evidence="1">ATP-AMP transphosphorylase</fullName>
    </alternativeName>
    <alternativeName>
        <fullName evidence="1">ATP:AMP phosphotransferase</fullName>
    </alternativeName>
    <alternativeName>
        <fullName evidence="1">Adenylate monophosphate kinase</fullName>
    </alternativeName>
</protein>
<name>KAD_CAMHC</name>
<proteinExistence type="inferred from homology"/>
<gene>
    <name evidence="1" type="primary">adk</name>
    <name type="ordered locus">CHAB381_0295</name>
</gene>
<organism>
    <name type="scientific">Campylobacter hominis (strain ATCC BAA-381 / DSM 21671 / CCUG 45161 / LMG 19568 / NCTC 13146 / CH001A)</name>
    <dbReference type="NCBI Taxonomy" id="360107"/>
    <lineage>
        <taxon>Bacteria</taxon>
        <taxon>Pseudomonadati</taxon>
        <taxon>Campylobacterota</taxon>
        <taxon>Epsilonproteobacteria</taxon>
        <taxon>Campylobacterales</taxon>
        <taxon>Campylobacteraceae</taxon>
        <taxon>Campylobacter</taxon>
    </lineage>
</organism>
<dbReference type="EC" id="2.7.4.3" evidence="1"/>
<dbReference type="EMBL" id="CP000776">
    <property type="protein sequence ID" value="ABS51102.1"/>
    <property type="molecule type" value="Genomic_DNA"/>
</dbReference>
<dbReference type="RefSeq" id="WP_012108180.1">
    <property type="nucleotide sequence ID" value="NC_009714.1"/>
</dbReference>
<dbReference type="SMR" id="A7I057"/>
<dbReference type="STRING" id="360107.CHAB381_0295"/>
<dbReference type="KEGG" id="cha:CHAB381_0295"/>
<dbReference type="eggNOG" id="COG0563">
    <property type="taxonomic scope" value="Bacteria"/>
</dbReference>
<dbReference type="HOGENOM" id="CLU_032354_4_1_7"/>
<dbReference type="OrthoDB" id="9805030at2"/>
<dbReference type="UniPathway" id="UPA00588">
    <property type="reaction ID" value="UER00649"/>
</dbReference>
<dbReference type="Proteomes" id="UP000002407">
    <property type="component" value="Chromosome"/>
</dbReference>
<dbReference type="GO" id="GO:0005737">
    <property type="term" value="C:cytoplasm"/>
    <property type="evidence" value="ECO:0007669"/>
    <property type="project" value="UniProtKB-SubCell"/>
</dbReference>
<dbReference type="GO" id="GO:0004017">
    <property type="term" value="F:adenylate kinase activity"/>
    <property type="evidence" value="ECO:0007669"/>
    <property type="project" value="UniProtKB-UniRule"/>
</dbReference>
<dbReference type="GO" id="GO:0005524">
    <property type="term" value="F:ATP binding"/>
    <property type="evidence" value="ECO:0007669"/>
    <property type="project" value="UniProtKB-UniRule"/>
</dbReference>
<dbReference type="GO" id="GO:0044209">
    <property type="term" value="P:AMP salvage"/>
    <property type="evidence" value="ECO:0007669"/>
    <property type="project" value="UniProtKB-UniRule"/>
</dbReference>
<dbReference type="CDD" id="cd01428">
    <property type="entry name" value="ADK"/>
    <property type="match status" value="1"/>
</dbReference>
<dbReference type="Gene3D" id="3.40.50.300">
    <property type="entry name" value="P-loop containing nucleotide triphosphate hydrolases"/>
    <property type="match status" value="1"/>
</dbReference>
<dbReference type="HAMAP" id="MF_00235">
    <property type="entry name" value="Adenylate_kinase_Adk"/>
    <property type="match status" value="1"/>
</dbReference>
<dbReference type="InterPro" id="IPR000850">
    <property type="entry name" value="Adenylat/UMP-CMP_kin"/>
</dbReference>
<dbReference type="InterPro" id="IPR033690">
    <property type="entry name" value="Adenylat_kinase_CS"/>
</dbReference>
<dbReference type="InterPro" id="IPR027417">
    <property type="entry name" value="P-loop_NTPase"/>
</dbReference>
<dbReference type="NCBIfam" id="NF001384">
    <property type="entry name" value="PRK00279.2-2"/>
    <property type="match status" value="1"/>
</dbReference>
<dbReference type="PANTHER" id="PTHR23359">
    <property type="entry name" value="NUCLEOTIDE KINASE"/>
    <property type="match status" value="1"/>
</dbReference>
<dbReference type="Pfam" id="PF00406">
    <property type="entry name" value="ADK"/>
    <property type="match status" value="1"/>
</dbReference>
<dbReference type="PRINTS" id="PR00094">
    <property type="entry name" value="ADENYLTKNASE"/>
</dbReference>
<dbReference type="SUPFAM" id="SSF52540">
    <property type="entry name" value="P-loop containing nucleoside triphosphate hydrolases"/>
    <property type="match status" value="1"/>
</dbReference>
<dbReference type="PROSITE" id="PS00113">
    <property type="entry name" value="ADENYLATE_KINASE"/>
    <property type="match status" value="1"/>
</dbReference>
<accession>A7I057</accession>
<sequence length="192" mass="21254">MKNLFLIIGAPGSGKTTDAGCIAQMNQSVAHYSTGDLLRAEVAKDSELGKKIDKIISGGNLVPLEIVINTITSAIHACEKDFIIIDGYPRSVEQMTELDKVLANEYDINLSAVIEVNVSEEVAKERVLGRARGADDNEEVFYNRMKVFVEPIEEIRKFYNEKGIFHSINGERTIEEIVTDINAIIVKKIVQG</sequence>
<comment type="function">
    <text evidence="1">Catalyzes the reversible transfer of the terminal phosphate group between ATP and AMP. Plays an important role in cellular energy homeostasis and in adenine nucleotide metabolism.</text>
</comment>
<comment type="catalytic activity">
    <reaction evidence="1">
        <text>AMP + ATP = 2 ADP</text>
        <dbReference type="Rhea" id="RHEA:12973"/>
        <dbReference type="ChEBI" id="CHEBI:30616"/>
        <dbReference type="ChEBI" id="CHEBI:456215"/>
        <dbReference type="ChEBI" id="CHEBI:456216"/>
        <dbReference type="EC" id="2.7.4.3"/>
    </reaction>
</comment>
<comment type="pathway">
    <text evidence="1">Purine metabolism; AMP biosynthesis via salvage pathway; AMP from ADP: step 1/1.</text>
</comment>
<comment type="subunit">
    <text evidence="1">Monomer.</text>
</comment>
<comment type="subcellular location">
    <subcellularLocation>
        <location evidence="1">Cytoplasm</location>
    </subcellularLocation>
</comment>
<comment type="domain">
    <text evidence="1">Consists of three domains, a large central CORE domain and two small peripheral domains, NMPbind and LID, which undergo movements during catalysis. The LID domain closes over the site of phosphoryl transfer upon ATP binding. Assembling and dissambling the active center during each catalytic cycle provides an effective means to prevent ATP hydrolysis.</text>
</comment>
<comment type="similarity">
    <text evidence="1">Belongs to the adenylate kinase family.</text>
</comment>
<evidence type="ECO:0000255" key="1">
    <source>
        <dbReference type="HAMAP-Rule" id="MF_00235"/>
    </source>
</evidence>
<reference key="1">
    <citation type="submission" date="2007-07" db="EMBL/GenBank/DDBJ databases">
        <title>Complete genome sequence of Campylobacter hominis ATCC BAA-381, a commensal isolated from the human gastrointestinal tract.</title>
        <authorList>
            <person name="Fouts D.E."/>
            <person name="Mongodin E.F."/>
            <person name="Puiu D."/>
            <person name="Sebastian Y."/>
            <person name="Miller W.G."/>
            <person name="Mandrell R.E."/>
            <person name="Nelson K.E."/>
        </authorList>
    </citation>
    <scope>NUCLEOTIDE SEQUENCE [LARGE SCALE GENOMIC DNA]</scope>
    <source>
        <strain>ATCC BAA-381 / DSM 21671 / CCUG 45161 / LMG 19568 / NCTC 13146 / CH001A</strain>
    </source>
</reference>
<keyword id="KW-0067">ATP-binding</keyword>
<keyword id="KW-0963">Cytoplasm</keyword>
<keyword id="KW-0418">Kinase</keyword>
<keyword id="KW-0545">Nucleotide biosynthesis</keyword>
<keyword id="KW-0547">Nucleotide-binding</keyword>
<keyword id="KW-1185">Reference proteome</keyword>
<keyword id="KW-0808">Transferase</keyword>